<protein>
    <recommendedName>
        <fullName evidence="3">Tail assembly protein Gp24</fullName>
    </recommendedName>
    <alternativeName>
        <fullName>Gene product 24</fullName>
    </alternativeName>
    <alternativeName>
        <fullName>Gp24</fullName>
    </alternativeName>
    <alternativeName>
        <fullName evidence="3">Minor tail protein Gp24</fullName>
    </alternativeName>
</protein>
<proteinExistence type="inferred from homology"/>
<keyword id="KW-1185">Reference proteome</keyword>
<keyword id="KW-0688">Ribosomal frameshifting</keyword>
<keyword id="KW-1188">Viral release from host cell</keyword>
<keyword id="KW-1245">Viral tail assembly</keyword>
<evidence type="ECO:0000250" key="1">
    <source>
        <dbReference type="UniProtKB" id="P03734"/>
    </source>
</evidence>
<evidence type="ECO:0000269" key="2">
    <source>
    </source>
</evidence>
<evidence type="ECO:0000305" key="3"/>
<feature type="chain" id="PRO_0000164737" description="Tail assembly protein Gp24">
    <location>
        <begin position="1"/>
        <end position="132"/>
    </location>
</feature>
<sequence length="132" mass="14847">MTNVFTIDAFREEVKKKYAPVLIGLSDDVTVELKPLLKLGQKAREAVVEVFKEFADIPDLEEDDDDELVDEYSLQVCDIIAKAFRLIATKPKKLIAALDEEPDPRIRAELYAAVLNTWKRETQLGEAAPSPS</sequence>
<organismHost>
    <name type="scientific">Mycobacterium</name>
    <dbReference type="NCBI Taxonomy" id="1763"/>
</organismHost>
<comment type="function">
    <text evidence="1">Promotes tail assembly by creating a scaffold for the tail tube proteins. The tail assembly proteins Gp24 and Gp25 would wrap the linear tape measure protein to create a tail assembly scaffold. It would allow polymerization of tail tube protein during which Gp24 and Gp25 are released and therefore are absent from the mature virion. The tail assembly protein Gp25 is produced by a rare -1 ribosomal frameshift. The ratio Gp24/Gp25 is important for proper tail assembly.</text>
</comment>
<comment type="subunit">
    <text evidence="1">Interacts with tail assembly protein Gp25 and tape measure protein.</text>
</comment>
<comment type="alternative products">
    <event type="ribosomal frameshifting"/>
    <isoform>
        <id>Q05231-1</id>
        <name evidence="2">Tail assembly protein Gp24</name>
        <sequence type="displayed"/>
    </isoform>
    <isoform>
        <id>Q05232-1</id>
        <name evidence="2">Tail assembly protein Gp25</name>
        <sequence type="external"/>
    </isoform>
    <text evidence="2">A readthrough event might also occur in addition to the frameshifting event.</text>
</comment>
<comment type="miscellaneous">
    <molecule>Isoform Tail assembly protein Gp24</molecule>
    <text>Produced by conventional translation.</text>
</comment>
<comment type="similarity">
    <text evidence="3">Belongs to the L5likevirus tail assembly protein family.</text>
</comment>
<dbReference type="EMBL" id="Z18946">
    <property type="protein sequence ID" value="CAA79400.1"/>
    <property type="molecule type" value="Genomic_DNA"/>
</dbReference>
<dbReference type="PIR" id="S30969">
    <property type="entry name" value="S30969"/>
</dbReference>
<dbReference type="RefSeq" id="NP_039688.1">
    <molecule id="Q05231-1"/>
    <property type="nucleotide sequence ID" value="NC_001335.1"/>
</dbReference>
<dbReference type="GeneID" id="2942950"/>
<dbReference type="KEGG" id="vg:2942950"/>
<dbReference type="OrthoDB" id="7980at10239"/>
<dbReference type="Proteomes" id="UP000002123">
    <property type="component" value="Genome"/>
</dbReference>
<dbReference type="GO" id="GO:0098003">
    <property type="term" value="P:viral tail assembly"/>
    <property type="evidence" value="ECO:0007669"/>
    <property type="project" value="UniProtKB-KW"/>
</dbReference>
<dbReference type="GO" id="GO:0075523">
    <property type="term" value="P:viral translational frameshifting"/>
    <property type="evidence" value="ECO:0007669"/>
    <property type="project" value="UniProtKB-KW"/>
</dbReference>
<dbReference type="InterPro" id="IPR020132">
    <property type="entry name" value="Gp24/Gp25"/>
</dbReference>
<dbReference type="Pfam" id="PF17388">
    <property type="entry name" value="GP24_25"/>
    <property type="match status" value="1"/>
</dbReference>
<organism>
    <name type="scientific">Mycobacterium phage L5</name>
    <name type="common">Mycobacteriophage L5</name>
    <dbReference type="NCBI Taxonomy" id="31757"/>
    <lineage>
        <taxon>Viruses</taxon>
        <taxon>Duplodnaviria</taxon>
        <taxon>Heunggongvirae</taxon>
        <taxon>Uroviricota</taxon>
        <taxon>Caudoviricetes</taxon>
        <taxon>Fromanvirus</taxon>
    </lineage>
</organism>
<accession>Q05231</accession>
<gene>
    <name type="primary">24</name>
</gene>
<name>VG24_BPML5</name>
<reference key="1">
    <citation type="journal article" date="1993" name="Mol. Microbiol.">
        <title>DNA sequence, structure and gene expression of mycobacteriophage L5: a phage system for mycobacterial genetics.</title>
        <authorList>
            <person name="Hatfull G.F."/>
            <person name="Sarkis G.J."/>
        </authorList>
    </citation>
    <scope>NUCLEOTIDE SEQUENCE [LARGE SCALE GENOMIC DNA]</scope>
</reference>
<reference key="2">
    <citation type="journal article" date="2004" name="Mol. Cell">
        <title>Conserved translational frameshift in dsDNA bacteriophage tail assembly genes.</title>
        <authorList>
            <person name="Xu J."/>
            <person name="Hendrix R.W."/>
            <person name="Duda R.L."/>
        </authorList>
    </citation>
    <scope>RIBOSOMAL FRAMESHIFT</scope>
</reference>